<dbReference type="EC" id="6.3.4.4" evidence="1"/>
<dbReference type="EMBL" id="CP000932">
    <property type="protein sequence ID" value="ACM63726.1"/>
    <property type="molecule type" value="Genomic_DNA"/>
</dbReference>
<dbReference type="RefSeq" id="WP_012661109.1">
    <property type="nucleotide sequence ID" value="NC_012039.1"/>
</dbReference>
<dbReference type="SMR" id="B9KF91"/>
<dbReference type="STRING" id="306263.Cla_0368"/>
<dbReference type="KEGG" id="cla:CLA_0368"/>
<dbReference type="PATRIC" id="fig|306263.5.peg.369"/>
<dbReference type="eggNOG" id="COG0104">
    <property type="taxonomic scope" value="Bacteria"/>
</dbReference>
<dbReference type="HOGENOM" id="CLU_029848_0_0_7"/>
<dbReference type="UniPathway" id="UPA00075">
    <property type="reaction ID" value="UER00335"/>
</dbReference>
<dbReference type="Proteomes" id="UP000007727">
    <property type="component" value="Chromosome"/>
</dbReference>
<dbReference type="GO" id="GO:0005737">
    <property type="term" value="C:cytoplasm"/>
    <property type="evidence" value="ECO:0007669"/>
    <property type="project" value="UniProtKB-SubCell"/>
</dbReference>
<dbReference type="GO" id="GO:0004019">
    <property type="term" value="F:adenylosuccinate synthase activity"/>
    <property type="evidence" value="ECO:0007669"/>
    <property type="project" value="UniProtKB-UniRule"/>
</dbReference>
<dbReference type="GO" id="GO:0005525">
    <property type="term" value="F:GTP binding"/>
    <property type="evidence" value="ECO:0007669"/>
    <property type="project" value="UniProtKB-UniRule"/>
</dbReference>
<dbReference type="GO" id="GO:0000287">
    <property type="term" value="F:magnesium ion binding"/>
    <property type="evidence" value="ECO:0007669"/>
    <property type="project" value="UniProtKB-UniRule"/>
</dbReference>
<dbReference type="GO" id="GO:0044208">
    <property type="term" value="P:'de novo' AMP biosynthetic process"/>
    <property type="evidence" value="ECO:0007669"/>
    <property type="project" value="UniProtKB-UniRule"/>
</dbReference>
<dbReference type="GO" id="GO:0046040">
    <property type="term" value="P:IMP metabolic process"/>
    <property type="evidence" value="ECO:0007669"/>
    <property type="project" value="TreeGrafter"/>
</dbReference>
<dbReference type="CDD" id="cd03108">
    <property type="entry name" value="AdSS"/>
    <property type="match status" value="1"/>
</dbReference>
<dbReference type="FunFam" id="1.10.300.10:FF:000001">
    <property type="entry name" value="Adenylosuccinate synthetase"/>
    <property type="match status" value="1"/>
</dbReference>
<dbReference type="FunFam" id="3.90.170.10:FF:000001">
    <property type="entry name" value="Adenylosuccinate synthetase"/>
    <property type="match status" value="1"/>
</dbReference>
<dbReference type="Gene3D" id="3.40.440.10">
    <property type="entry name" value="Adenylosuccinate Synthetase, subunit A, domain 1"/>
    <property type="match status" value="1"/>
</dbReference>
<dbReference type="Gene3D" id="1.10.300.10">
    <property type="entry name" value="Adenylosuccinate Synthetase, subunit A, domain 2"/>
    <property type="match status" value="1"/>
</dbReference>
<dbReference type="Gene3D" id="3.90.170.10">
    <property type="entry name" value="Adenylosuccinate Synthetase, subunit A, domain 3"/>
    <property type="match status" value="1"/>
</dbReference>
<dbReference type="HAMAP" id="MF_00011">
    <property type="entry name" value="Adenylosucc_synth"/>
    <property type="match status" value="1"/>
</dbReference>
<dbReference type="InterPro" id="IPR018220">
    <property type="entry name" value="Adenylosuccin_syn_GTP-bd"/>
</dbReference>
<dbReference type="InterPro" id="IPR033128">
    <property type="entry name" value="Adenylosuccin_syn_Lys_AS"/>
</dbReference>
<dbReference type="InterPro" id="IPR042109">
    <property type="entry name" value="Adenylosuccinate_synth_dom1"/>
</dbReference>
<dbReference type="InterPro" id="IPR042110">
    <property type="entry name" value="Adenylosuccinate_synth_dom2"/>
</dbReference>
<dbReference type="InterPro" id="IPR042111">
    <property type="entry name" value="Adenylosuccinate_synth_dom3"/>
</dbReference>
<dbReference type="InterPro" id="IPR001114">
    <property type="entry name" value="Adenylosuccinate_synthetase"/>
</dbReference>
<dbReference type="InterPro" id="IPR027417">
    <property type="entry name" value="P-loop_NTPase"/>
</dbReference>
<dbReference type="NCBIfam" id="NF002223">
    <property type="entry name" value="PRK01117.1"/>
    <property type="match status" value="1"/>
</dbReference>
<dbReference type="NCBIfam" id="TIGR00184">
    <property type="entry name" value="purA"/>
    <property type="match status" value="1"/>
</dbReference>
<dbReference type="PANTHER" id="PTHR11846">
    <property type="entry name" value="ADENYLOSUCCINATE SYNTHETASE"/>
    <property type="match status" value="1"/>
</dbReference>
<dbReference type="PANTHER" id="PTHR11846:SF0">
    <property type="entry name" value="ADENYLOSUCCINATE SYNTHETASE"/>
    <property type="match status" value="1"/>
</dbReference>
<dbReference type="Pfam" id="PF00709">
    <property type="entry name" value="Adenylsucc_synt"/>
    <property type="match status" value="1"/>
</dbReference>
<dbReference type="SMART" id="SM00788">
    <property type="entry name" value="Adenylsucc_synt"/>
    <property type="match status" value="1"/>
</dbReference>
<dbReference type="SUPFAM" id="SSF52540">
    <property type="entry name" value="P-loop containing nucleoside triphosphate hydrolases"/>
    <property type="match status" value="1"/>
</dbReference>
<dbReference type="PROSITE" id="PS01266">
    <property type="entry name" value="ADENYLOSUCCIN_SYN_1"/>
    <property type="match status" value="1"/>
</dbReference>
<dbReference type="PROSITE" id="PS00513">
    <property type="entry name" value="ADENYLOSUCCIN_SYN_2"/>
    <property type="match status" value="1"/>
</dbReference>
<comment type="function">
    <text evidence="1">Plays an important role in the de novo pathway of purine nucleotide biosynthesis. Catalyzes the first committed step in the biosynthesis of AMP from IMP.</text>
</comment>
<comment type="catalytic activity">
    <reaction evidence="1">
        <text>IMP + L-aspartate + GTP = N(6)-(1,2-dicarboxyethyl)-AMP + GDP + phosphate + 2 H(+)</text>
        <dbReference type="Rhea" id="RHEA:15753"/>
        <dbReference type="ChEBI" id="CHEBI:15378"/>
        <dbReference type="ChEBI" id="CHEBI:29991"/>
        <dbReference type="ChEBI" id="CHEBI:37565"/>
        <dbReference type="ChEBI" id="CHEBI:43474"/>
        <dbReference type="ChEBI" id="CHEBI:57567"/>
        <dbReference type="ChEBI" id="CHEBI:58053"/>
        <dbReference type="ChEBI" id="CHEBI:58189"/>
        <dbReference type="EC" id="6.3.4.4"/>
    </reaction>
</comment>
<comment type="cofactor">
    <cofactor evidence="1">
        <name>Mg(2+)</name>
        <dbReference type="ChEBI" id="CHEBI:18420"/>
    </cofactor>
    <text evidence="1">Binds 1 Mg(2+) ion per subunit.</text>
</comment>
<comment type="pathway">
    <text evidence="1">Purine metabolism; AMP biosynthesis via de novo pathway; AMP from IMP: step 1/2.</text>
</comment>
<comment type="subunit">
    <text evidence="1">Homodimer.</text>
</comment>
<comment type="subcellular location">
    <subcellularLocation>
        <location evidence="1">Cytoplasm</location>
    </subcellularLocation>
</comment>
<comment type="similarity">
    <text evidence="1">Belongs to the adenylosuccinate synthetase family.</text>
</comment>
<feature type="chain" id="PRO_1000116460" description="Adenylosuccinate synthetase">
    <location>
        <begin position="1"/>
        <end position="416"/>
    </location>
</feature>
<feature type="active site" description="Proton acceptor" evidence="1">
    <location>
        <position position="14"/>
    </location>
</feature>
<feature type="active site" description="Proton donor" evidence="1">
    <location>
        <position position="42"/>
    </location>
</feature>
<feature type="binding site" evidence="1">
    <location>
        <begin position="13"/>
        <end position="19"/>
    </location>
    <ligand>
        <name>GTP</name>
        <dbReference type="ChEBI" id="CHEBI:37565"/>
    </ligand>
</feature>
<feature type="binding site" description="in other chain" evidence="1">
    <location>
        <begin position="14"/>
        <end position="17"/>
    </location>
    <ligand>
        <name>IMP</name>
        <dbReference type="ChEBI" id="CHEBI:58053"/>
        <note>ligand shared between dimeric partners</note>
    </ligand>
</feature>
<feature type="binding site" evidence="1">
    <location>
        <position position="14"/>
    </location>
    <ligand>
        <name>Mg(2+)</name>
        <dbReference type="ChEBI" id="CHEBI:18420"/>
    </ligand>
</feature>
<feature type="binding site" description="in other chain" evidence="1">
    <location>
        <begin position="39"/>
        <end position="42"/>
    </location>
    <ligand>
        <name>IMP</name>
        <dbReference type="ChEBI" id="CHEBI:58053"/>
        <note>ligand shared between dimeric partners</note>
    </ligand>
</feature>
<feature type="binding site" evidence="1">
    <location>
        <begin position="41"/>
        <end position="43"/>
    </location>
    <ligand>
        <name>GTP</name>
        <dbReference type="ChEBI" id="CHEBI:37565"/>
    </ligand>
</feature>
<feature type="binding site" evidence="1">
    <location>
        <position position="41"/>
    </location>
    <ligand>
        <name>Mg(2+)</name>
        <dbReference type="ChEBI" id="CHEBI:18420"/>
    </ligand>
</feature>
<feature type="binding site" description="in other chain" evidence="1">
    <location>
        <position position="126"/>
    </location>
    <ligand>
        <name>IMP</name>
        <dbReference type="ChEBI" id="CHEBI:58053"/>
        <note>ligand shared between dimeric partners</note>
    </ligand>
</feature>
<feature type="binding site" evidence="1">
    <location>
        <position position="140"/>
    </location>
    <ligand>
        <name>IMP</name>
        <dbReference type="ChEBI" id="CHEBI:58053"/>
        <note>ligand shared between dimeric partners</note>
    </ligand>
</feature>
<feature type="binding site" description="in other chain" evidence="1">
    <location>
        <position position="220"/>
    </location>
    <ligand>
        <name>IMP</name>
        <dbReference type="ChEBI" id="CHEBI:58053"/>
        <note>ligand shared between dimeric partners</note>
    </ligand>
</feature>
<feature type="binding site" description="in other chain" evidence="1">
    <location>
        <position position="235"/>
    </location>
    <ligand>
        <name>IMP</name>
        <dbReference type="ChEBI" id="CHEBI:58053"/>
        <note>ligand shared between dimeric partners</note>
    </ligand>
</feature>
<feature type="binding site" evidence="1">
    <location>
        <begin position="295"/>
        <end position="301"/>
    </location>
    <ligand>
        <name>substrate</name>
    </ligand>
</feature>
<feature type="binding site" description="in other chain" evidence="1">
    <location>
        <position position="299"/>
    </location>
    <ligand>
        <name>IMP</name>
        <dbReference type="ChEBI" id="CHEBI:58053"/>
        <note>ligand shared between dimeric partners</note>
    </ligand>
</feature>
<feature type="binding site" evidence="1">
    <location>
        <position position="301"/>
    </location>
    <ligand>
        <name>GTP</name>
        <dbReference type="ChEBI" id="CHEBI:37565"/>
    </ligand>
</feature>
<feature type="binding site" evidence="1">
    <location>
        <begin position="327"/>
        <end position="329"/>
    </location>
    <ligand>
        <name>GTP</name>
        <dbReference type="ChEBI" id="CHEBI:37565"/>
    </ligand>
</feature>
<feature type="binding site" evidence="1">
    <location>
        <begin position="405"/>
        <end position="407"/>
    </location>
    <ligand>
        <name>GTP</name>
        <dbReference type="ChEBI" id="CHEBI:37565"/>
    </ligand>
</feature>
<accession>B9KF91</accession>
<name>PURA_CAMLR</name>
<keyword id="KW-0963">Cytoplasm</keyword>
<keyword id="KW-0342">GTP-binding</keyword>
<keyword id="KW-0436">Ligase</keyword>
<keyword id="KW-0460">Magnesium</keyword>
<keyword id="KW-0479">Metal-binding</keyword>
<keyword id="KW-0547">Nucleotide-binding</keyword>
<keyword id="KW-0658">Purine biosynthesis</keyword>
<keyword id="KW-1185">Reference proteome</keyword>
<evidence type="ECO:0000255" key="1">
    <source>
        <dbReference type="HAMAP-Rule" id="MF_00011"/>
    </source>
</evidence>
<protein>
    <recommendedName>
        <fullName evidence="1">Adenylosuccinate synthetase</fullName>
        <shortName evidence="1">AMPSase</shortName>
        <shortName evidence="1">AdSS</shortName>
        <ecNumber evidence="1">6.3.4.4</ecNumber>
    </recommendedName>
    <alternativeName>
        <fullName evidence="1">IMP--aspartate ligase</fullName>
    </alternativeName>
</protein>
<reference key="1">
    <citation type="journal article" date="2008" name="Foodborne Pathog. Dis.">
        <title>The complete genome sequence and analysis of the human pathogen Campylobacter lari.</title>
        <authorList>
            <person name="Miller W.G."/>
            <person name="Wang G."/>
            <person name="Binnewies T.T."/>
            <person name="Parker C.T."/>
        </authorList>
    </citation>
    <scope>NUCLEOTIDE SEQUENCE [LARGE SCALE GENOMIC DNA]</scope>
    <source>
        <strain>RM2100 / D67 / ATCC BAA-1060</strain>
    </source>
</reference>
<proteinExistence type="inferred from homology"/>
<gene>
    <name evidence="1" type="primary">purA</name>
    <name type="ordered locus">Cla_0368</name>
</gene>
<sequence length="416" mass="46100">MSKADIVVGIQWGDEGKGKIVDKLCENYDYVCRSAGGHNAGHTIWVDGIRYALHLMPSGVLNKQCINVIGNGVVVNPDVLISEMAQFENLEGRLFISDRAHLNLNHHALIDQARERLKGDKAIGTTGKGIGPSYEDKISRNGHRVGELLEPEKLCENLMKDFELKKTYFDVLGIAMPSYDEILKDLKRFKEVLAPYITDTTRMLWKALDEDKKVLLEGAQGSMLDIDHGTYPYVTSSTTISAGALSGLGLNPKEIGKVIGIVKAYTTRVGNGAFPSEDLGEDGEKIGLIGKEIGVSTGRKRRCGWFDAVAVRYTARLNGLDTLSLMKLDVLDGFESVKICKAYEYKGQEIDYVPCDLENAKPIYEVMEGWDKVAGIRDYDLLPENAKKYIKRLEELSGVKVGYISTSPEREDTIIL</sequence>
<organism>
    <name type="scientific">Campylobacter lari (strain RM2100 / D67 / ATCC BAA-1060)</name>
    <dbReference type="NCBI Taxonomy" id="306263"/>
    <lineage>
        <taxon>Bacteria</taxon>
        <taxon>Pseudomonadati</taxon>
        <taxon>Campylobacterota</taxon>
        <taxon>Epsilonproteobacteria</taxon>
        <taxon>Campylobacterales</taxon>
        <taxon>Campylobacteraceae</taxon>
        <taxon>Campylobacter</taxon>
    </lineage>
</organism>